<proteinExistence type="inferred from homology"/>
<dbReference type="EC" id="2.7.4.6" evidence="1"/>
<dbReference type="EMBL" id="CP000720">
    <property type="protein sequence ID" value="ABS46769.1"/>
    <property type="molecule type" value="Genomic_DNA"/>
</dbReference>
<dbReference type="RefSeq" id="WP_012104805.1">
    <property type="nucleotide sequence ID" value="NC_009708.1"/>
</dbReference>
<dbReference type="SMR" id="A7FFY5"/>
<dbReference type="KEGG" id="ypi:YpsIP31758_1182"/>
<dbReference type="HOGENOM" id="CLU_060216_8_1_6"/>
<dbReference type="Proteomes" id="UP000002412">
    <property type="component" value="Chromosome"/>
</dbReference>
<dbReference type="GO" id="GO:0005737">
    <property type="term" value="C:cytoplasm"/>
    <property type="evidence" value="ECO:0007669"/>
    <property type="project" value="UniProtKB-SubCell"/>
</dbReference>
<dbReference type="GO" id="GO:0005524">
    <property type="term" value="F:ATP binding"/>
    <property type="evidence" value="ECO:0007669"/>
    <property type="project" value="UniProtKB-UniRule"/>
</dbReference>
<dbReference type="GO" id="GO:0046872">
    <property type="term" value="F:metal ion binding"/>
    <property type="evidence" value="ECO:0007669"/>
    <property type="project" value="UniProtKB-KW"/>
</dbReference>
<dbReference type="GO" id="GO:0004550">
    <property type="term" value="F:nucleoside diphosphate kinase activity"/>
    <property type="evidence" value="ECO:0007669"/>
    <property type="project" value="UniProtKB-UniRule"/>
</dbReference>
<dbReference type="GO" id="GO:0006241">
    <property type="term" value="P:CTP biosynthetic process"/>
    <property type="evidence" value="ECO:0007669"/>
    <property type="project" value="UniProtKB-UniRule"/>
</dbReference>
<dbReference type="GO" id="GO:0006183">
    <property type="term" value="P:GTP biosynthetic process"/>
    <property type="evidence" value="ECO:0007669"/>
    <property type="project" value="UniProtKB-UniRule"/>
</dbReference>
<dbReference type="GO" id="GO:0006228">
    <property type="term" value="P:UTP biosynthetic process"/>
    <property type="evidence" value="ECO:0007669"/>
    <property type="project" value="UniProtKB-UniRule"/>
</dbReference>
<dbReference type="CDD" id="cd04413">
    <property type="entry name" value="NDPk_I"/>
    <property type="match status" value="1"/>
</dbReference>
<dbReference type="FunFam" id="3.30.70.141:FF:000001">
    <property type="entry name" value="Nucleoside diphosphate kinase"/>
    <property type="match status" value="1"/>
</dbReference>
<dbReference type="Gene3D" id="3.30.70.141">
    <property type="entry name" value="Nucleoside diphosphate kinase-like domain"/>
    <property type="match status" value="1"/>
</dbReference>
<dbReference type="HAMAP" id="MF_00451">
    <property type="entry name" value="NDP_kinase"/>
    <property type="match status" value="1"/>
</dbReference>
<dbReference type="InterPro" id="IPR034907">
    <property type="entry name" value="NDK-like_dom"/>
</dbReference>
<dbReference type="InterPro" id="IPR036850">
    <property type="entry name" value="NDK-like_dom_sf"/>
</dbReference>
<dbReference type="InterPro" id="IPR001564">
    <property type="entry name" value="Nucleoside_diP_kinase"/>
</dbReference>
<dbReference type="InterPro" id="IPR023005">
    <property type="entry name" value="Nucleoside_diP_kinase_AS"/>
</dbReference>
<dbReference type="NCBIfam" id="NF001908">
    <property type="entry name" value="PRK00668.1"/>
    <property type="match status" value="1"/>
</dbReference>
<dbReference type="PANTHER" id="PTHR46161">
    <property type="entry name" value="NUCLEOSIDE DIPHOSPHATE KINASE"/>
    <property type="match status" value="1"/>
</dbReference>
<dbReference type="PANTHER" id="PTHR46161:SF3">
    <property type="entry name" value="NUCLEOSIDE DIPHOSPHATE KINASE DDB_G0292928-RELATED"/>
    <property type="match status" value="1"/>
</dbReference>
<dbReference type="Pfam" id="PF00334">
    <property type="entry name" value="NDK"/>
    <property type="match status" value="1"/>
</dbReference>
<dbReference type="PRINTS" id="PR01243">
    <property type="entry name" value="NUCDPKINASE"/>
</dbReference>
<dbReference type="SMART" id="SM00562">
    <property type="entry name" value="NDK"/>
    <property type="match status" value="1"/>
</dbReference>
<dbReference type="SUPFAM" id="SSF54919">
    <property type="entry name" value="Nucleoside diphosphate kinase, NDK"/>
    <property type="match status" value="1"/>
</dbReference>
<dbReference type="PROSITE" id="PS00469">
    <property type="entry name" value="NDPK"/>
    <property type="match status" value="1"/>
</dbReference>
<dbReference type="PROSITE" id="PS51374">
    <property type="entry name" value="NDPK_LIKE"/>
    <property type="match status" value="1"/>
</dbReference>
<reference key="1">
    <citation type="journal article" date="2007" name="PLoS Genet.">
        <title>The complete genome sequence of Yersinia pseudotuberculosis IP31758, the causative agent of Far East scarlet-like fever.</title>
        <authorList>
            <person name="Eppinger M."/>
            <person name="Rosovitz M.J."/>
            <person name="Fricke W.F."/>
            <person name="Rasko D.A."/>
            <person name="Kokorina G."/>
            <person name="Fayolle C."/>
            <person name="Lindler L.E."/>
            <person name="Carniel E."/>
            <person name="Ravel J."/>
        </authorList>
    </citation>
    <scope>NUCLEOTIDE SEQUENCE [LARGE SCALE GENOMIC DNA]</scope>
    <source>
        <strain>IP 31758</strain>
    </source>
</reference>
<protein>
    <recommendedName>
        <fullName evidence="1">Nucleoside diphosphate kinase</fullName>
        <shortName evidence="1">NDK</shortName>
        <shortName evidence="1">NDP kinase</shortName>
        <ecNumber evidence="1">2.7.4.6</ecNumber>
    </recommendedName>
    <alternativeName>
        <fullName evidence="1">Nucleoside-2-P kinase</fullName>
    </alternativeName>
</protein>
<accession>A7FFY5</accession>
<name>NDK_YERP3</name>
<keyword id="KW-0067">ATP-binding</keyword>
<keyword id="KW-0963">Cytoplasm</keyword>
<keyword id="KW-0418">Kinase</keyword>
<keyword id="KW-0460">Magnesium</keyword>
<keyword id="KW-0479">Metal-binding</keyword>
<keyword id="KW-0546">Nucleotide metabolism</keyword>
<keyword id="KW-0547">Nucleotide-binding</keyword>
<keyword id="KW-0597">Phosphoprotein</keyword>
<keyword id="KW-0808">Transferase</keyword>
<gene>
    <name evidence="1" type="primary">ndk</name>
    <name type="ordered locus">YpsIP31758_1182</name>
</gene>
<evidence type="ECO:0000255" key="1">
    <source>
        <dbReference type="HAMAP-Rule" id="MF_00451"/>
    </source>
</evidence>
<comment type="function">
    <text evidence="1">Major role in the synthesis of nucleoside triphosphates other than ATP. The ATP gamma phosphate is transferred to the NDP beta phosphate via a ping-pong mechanism, using a phosphorylated active-site intermediate.</text>
</comment>
<comment type="catalytic activity">
    <reaction evidence="1">
        <text>a 2'-deoxyribonucleoside 5'-diphosphate + ATP = a 2'-deoxyribonucleoside 5'-triphosphate + ADP</text>
        <dbReference type="Rhea" id="RHEA:44640"/>
        <dbReference type="ChEBI" id="CHEBI:30616"/>
        <dbReference type="ChEBI" id="CHEBI:61560"/>
        <dbReference type="ChEBI" id="CHEBI:73316"/>
        <dbReference type="ChEBI" id="CHEBI:456216"/>
        <dbReference type="EC" id="2.7.4.6"/>
    </reaction>
</comment>
<comment type="catalytic activity">
    <reaction evidence="1">
        <text>a ribonucleoside 5'-diphosphate + ATP = a ribonucleoside 5'-triphosphate + ADP</text>
        <dbReference type="Rhea" id="RHEA:18113"/>
        <dbReference type="ChEBI" id="CHEBI:30616"/>
        <dbReference type="ChEBI" id="CHEBI:57930"/>
        <dbReference type="ChEBI" id="CHEBI:61557"/>
        <dbReference type="ChEBI" id="CHEBI:456216"/>
        <dbReference type="EC" id="2.7.4.6"/>
    </reaction>
</comment>
<comment type="cofactor">
    <cofactor evidence="1">
        <name>Mg(2+)</name>
        <dbReference type="ChEBI" id="CHEBI:18420"/>
    </cofactor>
</comment>
<comment type="subunit">
    <text evidence="1">Homotetramer.</text>
</comment>
<comment type="subcellular location">
    <subcellularLocation>
        <location evidence="1">Cytoplasm</location>
    </subcellularLocation>
</comment>
<comment type="similarity">
    <text evidence="1">Belongs to the NDK family.</text>
</comment>
<organism>
    <name type="scientific">Yersinia pseudotuberculosis serotype O:1b (strain IP 31758)</name>
    <dbReference type="NCBI Taxonomy" id="349747"/>
    <lineage>
        <taxon>Bacteria</taxon>
        <taxon>Pseudomonadati</taxon>
        <taxon>Pseudomonadota</taxon>
        <taxon>Gammaproteobacteria</taxon>
        <taxon>Enterobacterales</taxon>
        <taxon>Yersiniaceae</taxon>
        <taxon>Yersinia</taxon>
    </lineage>
</organism>
<feature type="chain" id="PRO_1000060285" description="Nucleoside diphosphate kinase">
    <location>
        <begin position="1"/>
        <end position="142"/>
    </location>
</feature>
<feature type="active site" description="Pros-phosphohistidine intermediate" evidence="1">
    <location>
        <position position="117"/>
    </location>
</feature>
<feature type="binding site" evidence="1">
    <location>
        <position position="11"/>
    </location>
    <ligand>
        <name>ATP</name>
        <dbReference type="ChEBI" id="CHEBI:30616"/>
    </ligand>
</feature>
<feature type="binding site" evidence="1">
    <location>
        <position position="59"/>
    </location>
    <ligand>
        <name>ATP</name>
        <dbReference type="ChEBI" id="CHEBI:30616"/>
    </ligand>
</feature>
<feature type="binding site" evidence="1">
    <location>
        <position position="87"/>
    </location>
    <ligand>
        <name>ATP</name>
        <dbReference type="ChEBI" id="CHEBI:30616"/>
    </ligand>
</feature>
<feature type="binding site" evidence="1">
    <location>
        <position position="93"/>
    </location>
    <ligand>
        <name>ATP</name>
        <dbReference type="ChEBI" id="CHEBI:30616"/>
    </ligand>
</feature>
<feature type="binding site" evidence="1">
    <location>
        <position position="104"/>
    </location>
    <ligand>
        <name>ATP</name>
        <dbReference type="ChEBI" id="CHEBI:30616"/>
    </ligand>
</feature>
<feature type="binding site" evidence="1">
    <location>
        <position position="114"/>
    </location>
    <ligand>
        <name>ATP</name>
        <dbReference type="ChEBI" id="CHEBI:30616"/>
    </ligand>
</feature>
<sequence>MALERTFSIIKPNAVANNNIGAIYARFESAGFNIIAAKMLHLTKEQAEGFYAEHKGRPFFDGLVEFMTSGPIMVQVLEGENAVQRHRDIMGATNPDNALAGTLRADFADSFTANAVHGSDAVESAQREIAYFFAADEIFPRS</sequence>